<name>CT204_MOUSE</name>
<reference key="1">
    <citation type="journal article" date="2009" name="PLoS Biol.">
        <title>Lineage-specific biology revealed by a finished genome assembly of the mouse.</title>
        <authorList>
            <person name="Church D.M."/>
            <person name="Goodstadt L."/>
            <person name="Hillier L.W."/>
            <person name="Zody M.C."/>
            <person name="Goldstein S."/>
            <person name="She X."/>
            <person name="Bult C.J."/>
            <person name="Agarwala R."/>
            <person name="Cherry J.L."/>
            <person name="DiCuccio M."/>
            <person name="Hlavina W."/>
            <person name="Kapustin Y."/>
            <person name="Meric P."/>
            <person name="Maglott D."/>
            <person name="Birtle Z."/>
            <person name="Marques A.C."/>
            <person name="Graves T."/>
            <person name="Zhou S."/>
            <person name="Teague B."/>
            <person name="Potamousis K."/>
            <person name="Churas C."/>
            <person name="Place M."/>
            <person name="Herschleb J."/>
            <person name="Runnheim R."/>
            <person name="Forrest D."/>
            <person name="Amos-Landgraf J."/>
            <person name="Schwartz D.C."/>
            <person name="Cheng Z."/>
            <person name="Lindblad-Toh K."/>
            <person name="Eichler E.E."/>
            <person name="Ponting C.P."/>
        </authorList>
    </citation>
    <scope>NUCLEOTIDE SEQUENCE [LARGE SCALE GENOMIC DNA]</scope>
    <source>
        <strain>C57BL/6J</strain>
    </source>
</reference>
<feature type="signal peptide" evidence="1">
    <location>
        <begin position="1"/>
        <end position="23"/>
    </location>
</feature>
<feature type="chain" id="PRO_5007303199" description="Uncharacterized protein C20orf204 homolog">
    <location>
        <begin position="24"/>
        <end position="188"/>
    </location>
</feature>
<feature type="glycosylation site" description="N-linked (GlcNAc...) asparagine" evidence="1">
    <location>
        <position position="74"/>
    </location>
</feature>
<keyword id="KW-0325">Glycoprotein</keyword>
<keyword id="KW-1185">Reference proteome</keyword>
<keyword id="KW-0732">Signal</keyword>
<dbReference type="EMBL" id="AL844529">
    <property type="status" value="NOT_ANNOTATED_CDS"/>
    <property type="molecule type" value="Genomic_DNA"/>
</dbReference>
<dbReference type="FunCoup" id="A0A140LIA7">
    <property type="interactions" value="1"/>
</dbReference>
<dbReference type="GlyCosmos" id="A0A140LIA7">
    <property type="glycosylation" value="1 site, No reported glycans"/>
</dbReference>
<dbReference type="GlyGen" id="A0A140LIA7">
    <property type="glycosylation" value="1 site"/>
</dbReference>
<dbReference type="Ensembl" id="ENSMUST00000207856.2">
    <property type="protein sequence ID" value="ENSMUSP00000146742.2"/>
    <property type="gene ID" value="ENSMUSG00000108976.2"/>
</dbReference>
<dbReference type="AGR" id="MGI:5588956"/>
<dbReference type="MGI" id="MGI:5588956">
    <property type="gene designation" value="Gm29797"/>
</dbReference>
<dbReference type="VEuPathDB" id="HostDB:ENSMUSG00000108976"/>
<dbReference type="GeneTree" id="ENSGT00640000092841"/>
<dbReference type="InParanoid" id="A0A140LIA7"/>
<dbReference type="OMA" id="VMRRHCW"/>
<dbReference type="OrthoDB" id="9451460at2759"/>
<dbReference type="PRO" id="PR:A0A140LIA7"/>
<dbReference type="Proteomes" id="UP000000589">
    <property type="component" value="Chromosome 2"/>
</dbReference>
<dbReference type="RNAct" id="A0A140LIA7">
    <property type="molecule type" value="protein"/>
</dbReference>
<dbReference type="Bgee" id="ENSMUSG00000108976">
    <property type="expression patterns" value="Expressed in secondary oocyte and 35 other cell types or tissues"/>
</dbReference>
<gene>
    <name evidence="3" type="primary">Gm29797</name>
</gene>
<sequence length="188" mass="20635">MVRPKLAFYILPLLLAFLGSALGWPGSQSCSVQEVLRHYQAVIFQDLQTAMQWAGLGVQHTQPGSRHHRFIQKNLTGAGGGQGQPGTSCDAQKESSILLSIESLGQTLLGSVAGVPHNALEKAAWTVAVRTEAVMRRHCGTSYRIQQPRKHAVQLRNSRRRLLLRALYAVATCWEKLFALSAMATGEF</sequence>
<evidence type="ECO:0000255" key="1"/>
<evidence type="ECO:0000305" key="2"/>
<evidence type="ECO:0000312" key="3">
    <source>
        <dbReference type="MGI" id="MGI:5588956"/>
    </source>
</evidence>
<protein>
    <recommendedName>
        <fullName evidence="2">Uncharacterized protein C20orf204 homolog</fullName>
    </recommendedName>
</protein>
<accession>A0A140LIA7</accession>
<organism>
    <name type="scientific">Mus musculus</name>
    <name type="common">Mouse</name>
    <dbReference type="NCBI Taxonomy" id="10090"/>
    <lineage>
        <taxon>Eukaryota</taxon>
        <taxon>Metazoa</taxon>
        <taxon>Chordata</taxon>
        <taxon>Craniata</taxon>
        <taxon>Vertebrata</taxon>
        <taxon>Euteleostomi</taxon>
        <taxon>Mammalia</taxon>
        <taxon>Eutheria</taxon>
        <taxon>Euarchontoglires</taxon>
        <taxon>Glires</taxon>
        <taxon>Rodentia</taxon>
        <taxon>Myomorpha</taxon>
        <taxon>Muroidea</taxon>
        <taxon>Muridae</taxon>
        <taxon>Murinae</taxon>
        <taxon>Mus</taxon>
        <taxon>Mus</taxon>
    </lineage>
</organism>
<proteinExistence type="inferred from homology"/>